<evidence type="ECO:0000250" key="1"/>
<evidence type="ECO:0000305" key="2"/>
<dbReference type="EC" id="4.2.1.20"/>
<dbReference type="EMBL" id="Z19055">
    <property type="protein sequence ID" value="CAA79500.1"/>
    <property type="molecule type" value="Genomic_DNA"/>
</dbReference>
<dbReference type="EMBL" id="AE013218">
    <property type="protein sequence ID" value="AAM67825.1"/>
    <property type="molecule type" value="Genomic_DNA"/>
</dbReference>
<dbReference type="PIR" id="C49897">
    <property type="entry name" value="C49897"/>
</dbReference>
<dbReference type="RefSeq" id="WP_011053792.1">
    <property type="nucleotide sequence ID" value="NC_004061.1"/>
</dbReference>
<dbReference type="SMR" id="P42391"/>
<dbReference type="STRING" id="198804.BUsg_267"/>
<dbReference type="GeneID" id="93003737"/>
<dbReference type="KEGG" id="bas:BUsg_267"/>
<dbReference type="eggNOG" id="COG0133">
    <property type="taxonomic scope" value="Bacteria"/>
</dbReference>
<dbReference type="HOGENOM" id="CLU_016734_3_1_6"/>
<dbReference type="UniPathway" id="UPA00035">
    <property type="reaction ID" value="UER00044"/>
</dbReference>
<dbReference type="Proteomes" id="UP000000416">
    <property type="component" value="Chromosome"/>
</dbReference>
<dbReference type="GO" id="GO:0005737">
    <property type="term" value="C:cytoplasm"/>
    <property type="evidence" value="ECO:0007669"/>
    <property type="project" value="TreeGrafter"/>
</dbReference>
<dbReference type="GO" id="GO:0004834">
    <property type="term" value="F:tryptophan synthase activity"/>
    <property type="evidence" value="ECO:0007669"/>
    <property type="project" value="UniProtKB-UniRule"/>
</dbReference>
<dbReference type="CDD" id="cd06446">
    <property type="entry name" value="Trp-synth_B"/>
    <property type="match status" value="1"/>
</dbReference>
<dbReference type="FunFam" id="3.40.50.1100:FF:000001">
    <property type="entry name" value="Tryptophan synthase beta chain"/>
    <property type="match status" value="1"/>
</dbReference>
<dbReference type="FunFam" id="3.40.50.1100:FF:000004">
    <property type="entry name" value="Tryptophan synthase beta chain"/>
    <property type="match status" value="1"/>
</dbReference>
<dbReference type="Gene3D" id="3.40.50.1100">
    <property type="match status" value="2"/>
</dbReference>
<dbReference type="HAMAP" id="MF_00133">
    <property type="entry name" value="Trp_synth_beta"/>
    <property type="match status" value="1"/>
</dbReference>
<dbReference type="InterPro" id="IPR006653">
    <property type="entry name" value="Trp_synth_b_CS"/>
</dbReference>
<dbReference type="InterPro" id="IPR006654">
    <property type="entry name" value="Trp_synth_beta"/>
</dbReference>
<dbReference type="InterPro" id="IPR023026">
    <property type="entry name" value="Trp_synth_beta/beta-like"/>
</dbReference>
<dbReference type="InterPro" id="IPR001926">
    <property type="entry name" value="TrpB-like_PALP"/>
</dbReference>
<dbReference type="InterPro" id="IPR036052">
    <property type="entry name" value="TrpB-like_PALP_sf"/>
</dbReference>
<dbReference type="NCBIfam" id="TIGR00263">
    <property type="entry name" value="trpB"/>
    <property type="match status" value="1"/>
</dbReference>
<dbReference type="PANTHER" id="PTHR48077:SF3">
    <property type="entry name" value="TRYPTOPHAN SYNTHASE"/>
    <property type="match status" value="1"/>
</dbReference>
<dbReference type="PANTHER" id="PTHR48077">
    <property type="entry name" value="TRYPTOPHAN SYNTHASE-RELATED"/>
    <property type="match status" value="1"/>
</dbReference>
<dbReference type="Pfam" id="PF00291">
    <property type="entry name" value="PALP"/>
    <property type="match status" value="1"/>
</dbReference>
<dbReference type="PIRSF" id="PIRSF001413">
    <property type="entry name" value="Trp_syn_beta"/>
    <property type="match status" value="1"/>
</dbReference>
<dbReference type="SUPFAM" id="SSF53686">
    <property type="entry name" value="Tryptophan synthase beta subunit-like PLP-dependent enzymes"/>
    <property type="match status" value="1"/>
</dbReference>
<dbReference type="PROSITE" id="PS00168">
    <property type="entry name" value="TRP_SYNTHASE_BETA"/>
    <property type="match status" value="1"/>
</dbReference>
<name>TRPB_BUCAP</name>
<reference key="1">
    <citation type="journal article" date="1993" name="J. Bacteriol.">
        <title>Molecular cloning and nucleotide sequence of a putative trpDC(F)BA operon in Buchnera aphidicola (endosymbiont of the aphid Schizaphis graminum).</title>
        <authorList>
            <person name="Munson M.A."/>
            <person name="Baumann P."/>
        </authorList>
    </citation>
    <scope>NUCLEOTIDE SEQUENCE [GENOMIC DNA]</scope>
</reference>
<reference key="2">
    <citation type="journal article" date="2002" name="Science">
        <title>50 million years of genomic stasis in endosymbiotic bacteria.</title>
        <authorList>
            <person name="Tamas I."/>
            <person name="Klasson L."/>
            <person name="Canbaeck B."/>
            <person name="Naeslund A.K."/>
            <person name="Eriksson A.-S."/>
            <person name="Wernegreen J.J."/>
            <person name="Sandstroem J.P."/>
            <person name="Moran N.A."/>
            <person name="Andersson S.G.E."/>
        </authorList>
    </citation>
    <scope>NUCLEOTIDE SEQUENCE [LARGE SCALE GENOMIC DNA]</scope>
    <source>
        <strain>Sg</strain>
    </source>
</reference>
<gene>
    <name type="primary">trpB</name>
    <name type="ordered locus">BUsg_267</name>
</gene>
<feature type="chain" id="PRO_0000098927" description="Tryptophan synthase beta chain">
    <location>
        <begin position="1"/>
        <end position="399"/>
    </location>
</feature>
<feature type="modified residue" description="N6-(pyridoxal phosphate)lysine" evidence="1">
    <location>
        <position position="86"/>
    </location>
</feature>
<sequence>MTLLNPYFGKFGGMYVPQILMPALYQLEKNFVDAKKDSNFQKSFFNYLKNYAGRPTPLTLCNNLTNGTKTRIYLKREDLLHGGAHKTNQVLGQAMLAVKMKKKEIIAETGAGQHGVAAAIASALFNLKCKIYMGYKDIKRQSPNVFRMKLMGAEVVSVESGSGTLKDACNEALRDWSRNYQKSHYMIGTAAGPHPYPTIVKEFQKMIGEEAKKQILEQENRLPDAIIACVGGGSNAIGIFSDFIDEDVNLIGVEPAGQGIETGKHGAPLNHGRTGIYFGMKSHLMQSQEGQIEKSWSISAGLDFPSVGPEHSWLNSIHRAKYVSITDIEALEAFQILSKKEGIIPALESSHALAYALKLMYLDPKKEQVFIVNLSGRGDKDIFTVREILKKTEKKHESL</sequence>
<keyword id="KW-0028">Amino-acid biosynthesis</keyword>
<keyword id="KW-0057">Aromatic amino acid biosynthesis</keyword>
<keyword id="KW-0456">Lyase</keyword>
<keyword id="KW-0663">Pyridoxal phosphate</keyword>
<keyword id="KW-0822">Tryptophan biosynthesis</keyword>
<accession>P42391</accession>
<proteinExistence type="inferred from homology"/>
<organism>
    <name type="scientific">Buchnera aphidicola subsp. Schizaphis graminum (strain Sg)</name>
    <dbReference type="NCBI Taxonomy" id="198804"/>
    <lineage>
        <taxon>Bacteria</taxon>
        <taxon>Pseudomonadati</taxon>
        <taxon>Pseudomonadota</taxon>
        <taxon>Gammaproteobacteria</taxon>
        <taxon>Enterobacterales</taxon>
        <taxon>Erwiniaceae</taxon>
        <taxon>Buchnera</taxon>
    </lineage>
</organism>
<protein>
    <recommendedName>
        <fullName>Tryptophan synthase beta chain</fullName>
        <ecNumber>4.2.1.20</ecNumber>
    </recommendedName>
</protein>
<comment type="function">
    <text evidence="1">The beta subunit is responsible for the synthesis of L-tryptophan from indole and L-serine.</text>
</comment>
<comment type="catalytic activity">
    <reaction>
        <text>(1S,2R)-1-C-(indol-3-yl)glycerol 3-phosphate + L-serine = D-glyceraldehyde 3-phosphate + L-tryptophan + H2O</text>
        <dbReference type="Rhea" id="RHEA:10532"/>
        <dbReference type="ChEBI" id="CHEBI:15377"/>
        <dbReference type="ChEBI" id="CHEBI:33384"/>
        <dbReference type="ChEBI" id="CHEBI:57912"/>
        <dbReference type="ChEBI" id="CHEBI:58866"/>
        <dbReference type="ChEBI" id="CHEBI:59776"/>
        <dbReference type="EC" id="4.2.1.20"/>
    </reaction>
</comment>
<comment type="cofactor">
    <cofactor evidence="1">
        <name>pyridoxal 5'-phosphate</name>
        <dbReference type="ChEBI" id="CHEBI:597326"/>
    </cofactor>
</comment>
<comment type="pathway">
    <text>Amino-acid biosynthesis; L-tryptophan biosynthesis; L-tryptophan from chorismate: step 5/5.</text>
</comment>
<comment type="subunit">
    <text evidence="1">Tetramer of two alpha and two beta chains.</text>
</comment>
<comment type="similarity">
    <text evidence="2">Belongs to the TrpB family.</text>
</comment>